<keyword id="KW-0975">Bacterial flagellum</keyword>
<keyword id="KW-0574">Periplasm</keyword>
<keyword id="KW-1185">Reference proteome</keyword>
<keyword id="KW-0732">Signal</keyword>
<organism>
    <name type="scientific">Gluconobacter oxydans (strain 621H)</name>
    <name type="common">Gluconobacter suboxydans</name>
    <dbReference type="NCBI Taxonomy" id="290633"/>
    <lineage>
        <taxon>Bacteria</taxon>
        <taxon>Pseudomonadati</taxon>
        <taxon>Pseudomonadota</taxon>
        <taxon>Alphaproteobacteria</taxon>
        <taxon>Acetobacterales</taxon>
        <taxon>Acetobacteraceae</taxon>
        <taxon>Gluconobacter</taxon>
    </lineage>
</organism>
<reference key="1">
    <citation type="journal article" date="2005" name="Nat. Biotechnol.">
        <title>Complete genome sequence of the acetic acid bacterium Gluconobacter oxydans.</title>
        <authorList>
            <person name="Prust C."/>
            <person name="Hoffmeister M."/>
            <person name="Liesegang H."/>
            <person name="Wiezer A."/>
            <person name="Fricke W.F."/>
            <person name="Ehrenreich A."/>
            <person name="Gottschalk G."/>
            <person name="Deppenmeier U."/>
        </authorList>
    </citation>
    <scope>NUCLEOTIDE SEQUENCE [LARGE SCALE GENOMIC DNA]</scope>
    <source>
        <strain>621H</strain>
    </source>
</reference>
<proteinExistence type="inferred from homology"/>
<dbReference type="EMBL" id="CP000009">
    <property type="protein sequence ID" value="AAW60399.1"/>
    <property type="molecule type" value="Genomic_DNA"/>
</dbReference>
<dbReference type="RefSeq" id="WP_011252198.1">
    <property type="nucleotide sequence ID" value="NC_006677.1"/>
</dbReference>
<dbReference type="SMR" id="Q5FT97"/>
<dbReference type="STRING" id="290633.GOX0621"/>
<dbReference type="KEGG" id="gox:GOX0621"/>
<dbReference type="eggNOG" id="COG1706">
    <property type="taxonomic scope" value="Bacteria"/>
</dbReference>
<dbReference type="HOGENOM" id="CLU_045235_1_0_5"/>
<dbReference type="Proteomes" id="UP000006375">
    <property type="component" value="Chromosome"/>
</dbReference>
<dbReference type="GO" id="GO:0009428">
    <property type="term" value="C:bacterial-type flagellum basal body, distal rod, P ring"/>
    <property type="evidence" value="ECO:0007669"/>
    <property type="project" value="InterPro"/>
</dbReference>
<dbReference type="GO" id="GO:0030288">
    <property type="term" value="C:outer membrane-bounded periplasmic space"/>
    <property type="evidence" value="ECO:0007669"/>
    <property type="project" value="InterPro"/>
</dbReference>
<dbReference type="GO" id="GO:0005198">
    <property type="term" value="F:structural molecule activity"/>
    <property type="evidence" value="ECO:0007669"/>
    <property type="project" value="InterPro"/>
</dbReference>
<dbReference type="GO" id="GO:0071973">
    <property type="term" value="P:bacterial-type flagellum-dependent cell motility"/>
    <property type="evidence" value="ECO:0007669"/>
    <property type="project" value="InterPro"/>
</dbReference>
<dbReference type="HAMAP" id="MF_00416">
    <property type="entry name" value="FlgI"/>
    <property type="match status" value="1"/>
</dbReference>
<dbReference type="InterPro" id="IPR001782">
    <property type="entry name" value="Flag_FlgI"/>
</dbReference>
<dbReference type="NCBIfam" id="NF003676">
    <property type="entry name" value="PRK05303.1"/>
    <property type="match status" value="1"/>
</dbReference>
<dbReference type="PANTHER" id="PTHR30381">
    <property type="entry name" value="FLAGELLAR P-RING PERIPLASMIC PROTEIN FLGI"/>
    <property type="match status" value="1"/>
</dbReference>
<dbReference type="PANTHER" id="PTHR30381:SF0">
    <property type="entry name" value="FLAGELLAR P-RING PROTEIN"/>
    <property type="match status" value="1"/>
</dbReference>
<dbReference type="Pfam" id="PF02119">
    <property type="entry name" value="FlgI"/>
    <property type="match status" value="1"/>
</dbReference>
<dbReference type="PRINTS" id="PR01010">
    <property type="entry name" value="FLGPRINGFLGI"/>
</dbReference>
<protein>
    <recommendedName>
        <fullName evidence="1">Flagellar P-ring protein</fullName>
    </recommendedName>
    <alternativeName>
        <fullName evidence="1">Basal body P-ring protein</fullName>
    </alternativeName>
</protein>
<sequence length="380" mass="39962">MRFFTQSPFPLRTLTRRLTAFVCVGLLLLPGFTLAASVRIKDITDMEGVRSNQLIGYGLVVGLNGTGDRLTNTIFTRETLISMLNRLGVNIRDQETQLQTHDVAAVMVTADLPAFVHGGNRIDVTVSAAGDASSLTGGTLLVTPLMAADGEVYAVAQGSLATNAFSARGAAASITRNVPTSGHIANGGIVEREVPFDLSHRANLHLSLRNPDFTTASRIASIINRTFGPIAIVQDPRTVLLDLSNHDPVSTLSRIGDLLVTPDTPAKVVVDEASGTIIMGADVRISTVAVAQGNLTVQVTETPQVSQPGPFSGGQTAVVPRTNVKVDTGKTHHLAVVPGGTTLRELVSGLNALGVGPRDMISILQAIKADGALQAELEMR</sequence>
<gene>
    <name evidence="1" type="primary">flgI</name>
    <name type="ordered locus">GOX0621</name>
</gene>
<name>FLGI_GLUOX</name>
<accession>Q5FT97</accession>
<evidence type="ECO:0000255" key="1">
    <source>
        <dbReference type="HAMAP-Rule" id="MF_00416"/>
    </source>
</evidence>
<feature type="signal peptide" evidence="1">
    <location>
        <begin position="1"/>
        <end position="35"/>
    </location>
</feature>
<feature type="chain" id="PRO_0000041796" description="Flagellar P-ring protein">
    <location>
        <begin position="36"/>
        <end position="380"/>
    </location>
</feature>
<comment type="function">
    <text evidence="1">Assembles around the rod to form the L-ring and probably protects the motor/basal body from shearing forces during rotation.</text>
</comment>
<comment type="subunit">
    <text evidence="1">The basal body constitutes a major portion of the flagellar organelle and consists of four rings (L,P,S, and M) mounted on a central rod.</text>
</comment>
<comment type="subcellular location">
    <subcellularLocation>
        <location evidence="1">Periplasm</location>
    </subcellularLocation>
    <subcellularLocation>
        <location evidence="1">Bacterial flagellum basal body</location>
    </subcellularLocation>
</comment>
<comment type="similarity">
    <text evidence="1">Belongs to the FlgI family.</text>
</comment>